<name>ORF2_TTVVG</name>
<gene>
    <name type="ORF">ORF2</name>
</gene>
<organismHost>
    <name type="scientific">Homo sapiens</name>
    <name type="common">Human</name>
    <dbReference type="NCBI Taxonomy" id="9606"/>
</organismHost>
<sequence>MFIGRHYRKKRALSLLAVRTTQKARKLLIVMWTPPRNDQQYLNWQWYSSVLSSHAAMCGCPDAVAHFNHLASVLRAPQNPPPPGPQRNLPLRRLPALPAAPEAPGDRAPWPMAGGAEGEEGGAGGDADHGGAAGGPEDADLLDAVAAAET</sequence>
<proteinExistence type="predicted"/>
<organism>
    <name type="scientific">Torque teno virus (isolate Human/Ghana/GH1/1996)</name>
    <name type="common">TTV</name>
    <dbReference type="NCBI Taxonomy" id="487067"/>
    <lineage>
        <taxon>Viruses</taxon>
        <taxon>Viruses incertae sedis</taxon>
        <taxon>Anelloviridae</taxon>
        <taxon>Torque teno virus</taxon>
    </lineage>
</organism>
<reference key="1">
    <citation type="journal article" date="1999" name="Proc. Natl. Acad. Sci. U.S.A.">
        <title>Molecular and biophysical characterization of TT virus: evidence for a new virus family infecting humans.</title>
        <authorList>
            <person name="Mushahwar I.K."/>
            <person name="Erker J.C."/>
            <person name="Muerhoff A.S."/>
            <person name="Leary T.P."/>
            <person name="Simons J.N."/>
            <person name="Birkenmeyer L.G."/>
            <person name="Chalmers M.L."/>
            <person name="Pilot-Matias T.J."/>
            <person name="Dexai S.M."/>
        </authorList>
    </citation>
    <scope>NUCLEOTIDE SEQUENCE [GENOMIC DNA]</scope>
</reference>
<reference key="2">
    <citation type="journal article" date="2007" name="Rev. Med. Virol.">
        <title>Torque teno virus (TTV): current status.</title>
        <authorList>
            <person name="Hino S."/>
            <person name="Miyata H."/>
        </authorList>
    </citation>
    <scope>REVIEW</scope>
</reference>
<feature type="chain" id="PRO_0000317472" description="Uncharacterized ORF2 protein">
    <location>
        <begin position="1"/>
        <end position="150"/>
    </location>
</feature>
<feature type="region of interest" description="Disordered" evidence="1">
    <location>
        <begin position="75"/>
        <end position="150"/>
    </location>
</feature>
<feature type="compositionally biased region" description="Low complexity" evidence="1">
    <location>
        <begin position="86"/>
        <end position="103"/>
    </location>
</feature>
<protein>
    <recommendedName>
        <fullName>Uncharacterized ORF2 protein</fullName>
    </recommendedName>
</protein>
<accession>Q9WGY9</accession>
<evidence type="ECO:0000256" key="1">
    <source>
        <dbReference type="SAM" id="MobiDB-lite"/>
    </source>
</evidence>
<dbReference type="EMBL" id="AF122913">
    <property type="protein sequence ID" value="AAD24199.1"/>
    <property type="molecule type" value="Genomic_DNA"/>
</dbReference>
<dbReference type="Proteomes" id="UP000007550">
    <property type="component" value="Genome"/>
</dbReference>
<dbReference type="InterPro" id="IPR004118">
    <property type="entry name" value="HEV_TT_vir_Orf2/Gyrovir_Vp2_N"/>
</dbReference>
<dbReference type="Pfam" id="PF02957">
    <property type="entry name" value="TT_ORF2-like"/>
    <property type="match status" value="1"/>
</dbReference>
<keyword id="KW-1185">Reference proteome</keyword>